<comment type="function">
    <text evidence="1">Catalyzes the first step in hexosamine metabolism, converting fructose-6P into glucosamine-6P using glutamine as a nitrogen source.</text>
</comment>
<comment type="catalytic activity">
    <reaction evidence="1">
        <text>D-fructose 6-phosphate + L-glutamine = D-glucosamine 6-phosphate + L-glutamate</text>
        <dbReference type="Rhea" id="RHEA:13237"/>
        <dbReference type="ChEBI" id="CHEBI:29985"/>
        <dbReference type="ChEBI" id="CHEBI:58359"/>
        <dbReference type="ChEBI" id="CHEBI:58725"/>
        <dbReference type="ChEBI" id="CHEBI:61527"/>
        <dbReference type="EC" id="2.6.1.16"/>
    </reaction>
</comment>
<comment type="subunit">
    <text evidence="1">Homodimer.</text>
</comment>
<comment type="subcellular location">
    <subcellularLocation>
        <location evidence="1">Cytoplasm</location>
    </subcellularLocation>
</comment>
<feature type="initiator methionine" description="Removed" evidence="1">
    <location>
        <position position="1"/>
    </location>
</feature>
<feature type="chain" id="PRO_0000135393" description="Glutamine--fructose-6-phosphate aminotransferase [isomerizing]">
    <location>
        <begin position="2"/>
        <end position="604"/>
    </location>
</feature>
<feature type="domain" description="Glutamine amidotransferase type-2" evidence="1">
    <location>
        <begin position="2"/>
        <end position="218"/>
    </location>
</feature>
<feature type="domain" description="SIS 1" evidence="1">
    <location>
        <begin position="284"/>
        <end position="423"/>
    </location>
</feature>
<feature type="domain" description="SIS 2" evidence="1">
    <location>
        <begin position="456"/>
        <end position="594"/>
    </location>
</feature>
<feature type="active site" description="Nucleophile; for GATase activity" evidence="1">
    <location>
        <position position="2"/>
    </location>
</feature>
<feature type="active site" description="For Fru-6P isomerization activity" evidence="1">
    <location>
        <position position="599"/>
    </location>
</feature>
<feature type="sequence conflict" description="In Ref. 2; AAZ51604." evidence="2" ref="2">
    <original>V</original>
    <variation>A</variation>
    <location>
        <position position="452"/>
    </location>
</feature>
<protein>
    <recommendedName>
        <fullName evidence="1">Glutamine--fructose-6-phosphate aminotransferase [isomerizing]</fullName>
        <ecNumber evidence="1">2.6.1.16</ecNumber>
    </recommendedName>
    <alternativeName>
        <fullName evidence="1">D-fructose-6-phosphate amidotransferase</fullName>
    </alternativeName>
    <alternativeName>
        <fullName evidence="1">GFAT</fullName>
    </alternativeName>
    <alternativeName>
        <fullName evidence="1">Glucosamine-6-phosphate synthase</fullName>
    </alternativeName>
    <alternativeName>
        <fullName evidence="1">Hexosephosphate aminotransferase</fullName>
    </alternativeName>
    <alternativeName>
        <fullName evidence="1">L-glutamine--D-fructose-6-phosphate amidotransferase</fullName>
    </alternativeName>
</protein>
<proteinExistence type="inferred from homology"/>
<reference key="1">
    <citation type="journal article" date="2001" name="Proc. Natl. Acad. Sci. U.S.A.">
        <title>Complete genome sequence of an M1 strain of Streptococcus pyogenes.</title>
        <authorList>
            <person name="Ferretti J.J."/>
            <person name="McShan W.M."/>
            <person name="Ajdic D.J."/>
            <person name="Savic D.J."/>
            <person name="Savic G."/>
            <person name="Lyon K."/>
            <person name="Primeaux C."/>
            <person name="Sezate S."/>
            <person name="Suvorov A.N."/>
            <person name="Kenton S."/>
            <person name="Lai H.S."/>
            <person name="Lin S.P."/>
            <person name="Qian Y."/>
            <person name="Jia H.G."/>
            <person name="Najar F.Z."/>
            <person name="Ren Q."/>
            <person name="Zhu H."/>
            <person name="Song L."/>
            <person name="White J."/>
            <person name="Yuan X."/>
            <person name="Clifton S.W."/>
            <person name="Roe B.A."/>
            <person name="McLaughlin R.E."/>
        </authorList>
    </citation>
    <scope>NUCLEOTIDE SEQUENCE [LARGE SCALE GENOMIC DNA]</scope>
    <source>
        <strain>ATCC 700294 / SF370 / Serotype M1</strain>
    </source>
</reference>
<reference key="2">
    <citation type="journal article" date="2005" name="J. Infect. Dis.">
        <title>Evolutionary origin and emergence of a highly successful clone of serotype M1 group A Streptococcus involved multiple horizontal gene transfer events.</title>
        <authorList>
            <person name="Sumby P."/>
            <person name="Porcella S.F."/>
            <person name="Madrigal A.G."/>
            <person name="Barbian K.D."/>
            <person name="Virtaneva K."/>
            <person name="Ricklefs S.M."/>
            <person name="Sturdevant D.E."/>
            <person name="Graham M.R."/>
            <person name="Vuopio-Varkila J."/>
            <person name="Hoe N.P."/>
            <person name="Musser J.M."/>
        </authorList>
    </citation>
    <scope>NUCLEOTIDE SEQUENCE [LARGE SCALE GENOMIC DNA]</scope>
    <source>
        <strain>ATCC BAA-947 / MGAS5005 / Serotype M1</strain>
    </source>
</reference>
<dbReference type="EC" id="2.6.1.16" evidence="1"/>
<dbReference type="EMBL" id="AE004092">
    <property type="protein sequence ID" value="AAK34128.1"/>
    <property type="molecule type" value="Genomic_DNA"/>
</dbReference>
<dbReference type="EMBL" id="CP000017">
    <property type="protein sequence ID" value="AAZ51604.1"/>
    <property type="molecule type" value="Genomic_DNA"/>
</dbReference>
<dbReference type="RefSeq" id="NP_269407.1">
    <property type="nucleotide sequence ID" value="NC_002737.2"/>
</dbReference>
<dbReference type="SMR" id="Q99ZD3"/>
<dbReference type="MEROPS" id="C44.A08"/>
<dbReference type="PaxDb" id="1314-HKU360_01029"/>
<dbReference type="KEGG" id="spy:SPy_1280"/>
<dbReference type="KEGG" id="spz:M5005_Spy0986"/>
<dbReference type="PATRIC" id="fig|160490.10.peg.1118"/>
<dbReference type="HOGENOM" id="CLU_012520_7_1_9"/>
<dbReference type="OMA" id="ASEYRYA"/>
<dbReference type="Proteomes" id="UP000000750">
    <property type="component" value="Chromosome"/>
</dbReference>
<dbReference type="GO" id="GO:0005829">
    <property type="term" value="C:cytosol"/>
    <property type="evidence" value="ECO:0007669"/>
    <property type="project" value="TreeGrafter"/>
</dbReference>
<dbReference type="GO" id="GO:0097367">
    <property type="term" value="F:carbohydrate derivative binding"/>
    <property type="evidence" value="ECO:0007669"/>
    <property type="project" value="InterPro"/>
</dbReference>
<dbReference type="GO" id="GO:0004360">
    <property type="term" value="F:glutamine-fructose-6-phosphate transaminase (isomerizing) activity"/>
    <property type="evidence" value="ECO:0007669"/>
    <property type="project" value="UniProtKB-UniRule"/>
</dbReference>
<dbReference type="GO" id="GO:0005975">
    <property type="term" value="P:carbohydrate metabolic process"/>
    <property type="evidence" value="ECO:0007669"/>
    <property type="project" value="UniProtKB-UniRule"/>
</dbReference>
<dbReference type="GO" id="GO:0006002">
    <property type="term" value="P:fructose 6-phosphate metabolic process"/>
    <property type="evidence" value="ECO:0007669"/>
    <property type="project" value="TreeGrafter"/>
</dbReference>
<dbReference type="GO" id="GO:0006487">
    <property type="term" value="P:protein N-linked glycosylation"/>
    <property type="evidence" value="ECO:0007669"/>
    <property type="project" value="TreeGrafter"/>
</dbReference>
<dbReference type="GO" id="GO:0006047">
    <property type="term" value="P:UDP-N-acetylglucosamine metabolic process"/>
    <property type="evidence" value="ECO:0007669"/>
    <property type="project" value="TreeGrafter"/>
</dbReference>
<dbReference type="CDD" id="cd00714">
    <property type="entry name" value="GFAT"/>
    <property type="match status" value="1"/>
</dbReference>
<dbReference type="CDD" id="cd05008">
    <property type="entry name" value="SIS_GlmS_GlmD_1"/>
    <property type="match status" value="1"/>
</dbReference>
<dbReference type="CDD" id="cd05009">
    <property type="entry name" value="SIS_GlmS_GlmD_2"/>
    <property type="match status" value="1"/>
</dbReference>
<dbReference type="FunFam" id="3.40.50.10490:FF:000001">
    <property type="entry name" value="Glutamine--fructose-6-phosphate aminotransferase [isomerizing]"/>
    <property type="match status" value="1"/>
</dbReference>
<dbReference type="FunFam" id="3.40.50.10490:FF:000022">
    <property type="entry name" value="Glutamine--fructose-6-phosphate aminotransferase [isomerizing]"/>
    <property type="match status" value="1"/>
</dbReference>
<dbReference type="FunFam" id="3.60.20.10:FF:000006">
    <property type="entry name" value="Glutamine--fructose-6-phosphate aminotransferase [isomerizing]"/>
    <property type="match status" value="1"/>
</dbReference>
<dbReference type="Gene3D" id="3.40.50.10490">
    <property type="entry name" value="Glucose-6-phosphate isomerase like protein, domain 1"/>
    <property type="match status" value="2"/>
</dbReference>
<dbReference type="Gene3D" id="3.60.20.10">
    <property type="entry name" value="Glutamine Phosphoribosylpyrophosphate, subunit 1, domain 1"/>
    <property type="match status" value="1"/>
</dbReference>
<dbReference type="HAMAP" id="MF_00164">
    <property type="entry name" value="GlmS"/>
    <property type="match status" value="1"/>
</dbReference>
<dbReference type="InterPro" id="IPR017932">
    <property type="entry name" value="GATase_2_dom"/>
</dbReference>
<dbReference type="InterPro" id="IPR005855">
    <property type="entry name" value="GFAT"/>
</dbReference>
<dbReference type="InterPro" id="IPR047084">
    <property type="entry name" value="GFAT_N"/>
</dbReference>
<dbReference type="InterPro" id="IPR035466">
    <property type="entry name" value="GlmS/AgaS_SIS"/>
</dbReference>
<dbReference type="InterPro" id="IPR035490">
    <property type="entry name" value="GlmS/FrlB_SIS"/>
</dbReference>
<dbReference type="InterPro" id="IPR029055">
    <property type="entry name" value="Ntn_hydrolases_N"/>
</dbReference>
<dbReference type="InterPro" id="IPR001347">
    <property type="entry name" value="SIS_dom"/>
</dbReference>
<dbReference type="InterPro" id="IPR046348">
    <property type="entry name" value="SIS_dom_sf"/>
</dbReference>
<dbReference type="NCBIfam" id="TIGR01135">
    <property type="entry name" value="glmS"/>
    <property type="match status" value="1"/>
</dbReference>
<dbReference type="NCBIfam" id="NF001484">
    <property type="entry name" value="PRK00331.1"/>
    <property type="match status" value="1"/>
</dbReference>
<dbReference type="PANTHER" id="PTHR10937">
    <property type="entry name" value="GLUCOSAMINE--FRUCTOSE-6-PHOSPHATE AMINOTRANSFERASE, ISOMERIZING"/>
    <property type="match status" value="1"/>
</dbReference>
<dbReference type="PANTHER" id="PTHR10937:SF0">
    <property type="entry name" value="GLUTAMINE--FRUCTOSE-6-PHOSPHATE TRANSAMINASE (ISOMERIZING)"/>
    <property type="match status" value="1"/>
</dbReference>
<dbReference type="Pfam" id="PF13522">
    <property type="entry name" value="GATase_6"/>
    <property type="match status" value="1"/>
</dbReference>
<dbReference type="Pfam" id="PF01380">
    <property type="entry name" value="SIS"/>
    <property type="match status" value="2"/>
</dbReference>
<dbReference type="SUPFAM" id="SSF56235">
    <property type="entry name" value="N-terminal nucleophile aminohydrolases (Ntn hydrolases)"/>
    <property type="match status" value="1"/>
</dbReference>
<dbReference type="SUPFAM" id="SSF53697">
    <property type="entry name" value="SIS domain"/>
    <property type="match status" value="1"/>
</dbReference>
<dbReference type="PROSITE" id="PS51278">
    <property type="entry name" value="GATASE_TYPE_2"/>
    <property type="match status" value="1"/>
</dbReference>
<dbReference type="PROSITE" id="PS51464">
    <property type="entry name" value="SIS"/>
    <property type="match status" value="2"/>
</dbReference>
<organism>
    <name type="scientific">Streptococcus pyogenes serotype M1</name>
    <dbReference type="NCBI Taxonomy" id="301447"/>
    <lineage>
        <taxon>Bacteria</taxon>
        <taxon>Bacillati</taxon>
        <taxon>Bacillota</taxon>
        <taxon>Bacilli</taxon>
        <taxon>Lactobacillales</taxon>
        <taxon>Streptococcaceae</taxon>
        <taxon>Streptococcus</taxon>
    </lineage>
</organism>
<sequence>MCGIVGVVGNRNATDILMQGLEKLEYRGYDSAGIFVANANQTNLIKSVGRIADLRAKIGIDVAGSTGIGHTRWATHGQSTEDNAHPHTSQTGRFVLVHNGVIENYLHIKTEFLAGHDFKGQTDTEIAVHLIGKFVEEDKLSVLEAFKKSLSIIEGSYAFALMDSQATDTIYVAKNKSPLLIGLGEGYNMVCSDAMAMIRETSEFMEIHDKELVILTKDKVTVTDYDGKELIRDSYTAELDLSDIGKGTYPFYMLKEIDEQPTVMRQLISTYADETGNVQVDPAIITSIQEADRLYILAAGTSYHAGFATKNMLEQLTDTPVELGVASEWGYHMPLLSKKPMFILLSQSGETADSRQVLVKANAMGIPSLTVTNVPGSTLSREATYTMLIHAGPEIAVASTKAYTAQIAALAFLAKAVGEANGKQEALDFNLVHELSLVAQSIEATLSEKDLVAEKVQALLATTRNAFYIGRGNDYYVAMEAALKLKEISYIQCEGFAAGELKHGTISLIEEDTPVIALISSSQLVASHTRGNIQEVAARGAHVLTVVEEGLDREGDDIIVNKVHPFLAPIAMVIPTQLIAYYASLQRGLDVDKPRNLAKAVTVE</sequence>
<evidence type="ECO:0000255" key="1">
    <source>
        <dbReference type="HAMAP-Rule" id="MF_00164"/>
    </source>
</evidence>
<evidence type="ECO:0000305" key="2"/>
<keyword id="KW-0032">Aminotransferase</keyword>
<keyword id="KW-0963">Cytoplasm</keyword>
<keyword id="KW-0315">Glutamine amidotransferase</keyword>
<keyword id="KW-1185">Reference proteome</keyword>
<keyword id="KW-0677">Repeat</keyword>
<keyword id="KW-0808">Transferase</keyword>
<name>GLMS_STRP1</name>
<gene>
    <name evidence="1" type="primary">glmS</name>
    <name type="ordered locus">SPy_1280</name>
    <name type="ordered locus">M5005_Spy0986</name>
</gene>
<accession>Q99ZD3</accession>
<accession>Q48YG8</accession>